<protein>
    <recommendedName>
        <fullName>Polyadenylate-binding protein 2-A</fullName>
        <shortName>PABP-2-A</shortName>
        <shortName>Poly(A)-binding protein 2-A</shortName>
    </recommendedName>
    <alternativeName>
        <fullName>Nuclear poly(A)-binding protein 1-A</fullName>
    </alternativeName>
    <alternativeName>
        <fullName>Poly(A)-binding protein II-A</fullName>
        <shortName>PABII-A</shortName>
    </alternativeName>
    <alternativeName>
        <fullName>Polyadenylate-binding nuclear protein 1-A</fullName>
    </alternativeName>
    <alternativeName>
        <fullName>XLnPABP2-A</fullName>
    </alternativeName>
    <alternativeName>
        <fullName>nPABP2-A</fullName>
    </alternativeName>
    <alternativeName>
        <fullName>xPABPII-A</fullName>
    </alternativeName>
</protein>
<name>PAB2A_XENLA</name>
<organism>
    <name type="scientific">Xenopus laevis</name>
    <name type="common">African clawed frog</name>
    <dbReference type="NCBI Taxonomy" id="8355"/>
    <lineage>
        <taxon>Eukaryota</taxon>
        <taxon>Metazoa</taxon>
        <taxon>Chordata</taxon>
        <taxon>Craniata</taxon>
        <taxon>Vertebrata</taxon>
        <taxon>Euteleostomi</taxon>
        <taxon>Amphibia</taxon>
        <taxon>Batrachia</taxon>
        <taxon>Anura</taxon>
        <taxon>Pipoidea</taxon>
        <taxon>Pipidae</taxon>
        <taxon>Xenopodinae</taxon>
        <taxon>Xenopus</taxon>
        <taxon>Xenopus</taxon>
    </lineage>
</organism>
<evidence type="ECO:0000250" key="1">
    <source>
        <dbReference type="UniProtKB" id="Q28165"/>
    </source>
</evidence>
<evidence type="ECO:0000250" key="2">
    <source>
        <dbReference type="UniProtKB" id="Q86U42"/>
    </source>
</evidence>
<evidence type="ECO:0000255" key="3"/>
<evidence type="ECO:0000255" key="4">
    <source>
        <dbReference type="PROSITE-ProRule" id="PRU00176"/>
    </source>
</evidence>
<evidence type="ECO:0000256" key="5">
    <source>
        <dbReference type="SAM" id="MobiDB-lite"/>
    </source>
</evidence>
<evidence type="ECO:0000269" key="6">
    <source>
    </source>
</evidence>
<evidence type="ECO:0000269" key="7">
    <source>
    </source>
</evidence>
<evidence type="ECO:0000305" key="8"/>
<evidence type="ECO:0000312" key="9">
    <source>
        <dbReference type="EMBL" id="AAG36902.1"/>
    </source>
</evidence>
<evidence type="ECO:0000312" key="10">
    <source>
        <dbReference type="EMBL" id="AAH73657.1"/>
    </source>
</evidence>
<evidence type="ECO:0000312" key="11">
    <source>
        <dbReference type="EMBL" id="AAR26262.1"/>
    </source>
</evidence>
<sequence length="296" mass="32449">MAAVSSVASLRGADYENGLRGVAGPSDGGQDPGEDDPMGRGTLDLEMELLEQGRRSRRVGGRTTPGRRSGGRGGSGGGGAGGLEELEDEELEEEEPGELTGDQTIEDPELEAIKARVREMEEEAEKLKELQNEVEKQMNMSPPPGNAGPVIMSVEEKMEADARSIYVGNVDYGATAEELEAHFHGCGSVNRVTILCDKFTGHPKGFAYIEFCDKESVRTSLALDESLFRGRQIKVVPKRTNRPGISTTDRGFPRARYRARASSYSSRSRFYSGYTPRPRGRVYRGRARATSWYTPY</sequence>
<gene>
    <name type="primary">pabpn1-a</name>
    <name type="synonym">pabpii</name>
</gene>
<proteinExistence type="evidence at transcript level"/>
<dbReference type="EMBL" id="AF257236">
    <property type="protein sequence ID" value="AAG36902.1"/>
    <property type="molecule type" value="mRNA"/>
</dbReference>
<dbReference type="EMBL" id="AY382836">
    <property type="protein sequence ID" value="AAR26262.1"/>
    <property type="molecule type" value="mRNA"/>
</dbReference>
<dbReference type="EMBL" id="BC073657">
    <property type="protein sequence ID" value="AAH73657.1"/>
    <property type="molecule type" value="mRNA"/>
</dbReference>
<dbReference type="RefSeq" id="NP_001082057.1">
    <property type="nucleotide sequence ID" value="NM_001088588.1"/>
</dbReference>
<dbReference type="SMR" id="Q9DDY9"/>
<dbReference type="BioGRID" id="99536">
    <property type="interactions" value="1"/>
</dbReference>
<dbReference type="IntAct" id="Q9DDY9">
    <property type="interactions" value="1"/>
</dbReference>
<dbReference type="DNASU" id="398201"/>
<dbReference type="GeneID" id="398201"/>
<dbReference type="KEGG" id="xla:398201"/>
<dbReference type="AGR" id="Xenbase:XB-GENE-6251817"/>
<dbReference type="CTD" id="398201"/>
<dbReference type="Xenbase" id="XB-GENE-6251817">
    <property type="gene designation" value="pabpn1.S"/>
</dbReference>
<dbReference type="OMA" id="PGHAERM"/>
<dbReference type="OrthoDB" id="4726at2759"/>
<dbReference type="Proteomes" id="UP000186698">
    <property type="component" value="Chromosome 1S"/>
</dbReference>
<dbReference type="Bgee" id="398201">
    <property type="expression patterns" value="Expressed in gastrula and 19 other cell types or tissues"/>
</dbReference>
<dbReference type="GO" id="GO:0005737">
    <property type="term" value="C:cytoplasm"/>
    <property type="evidence" value="ECO:0000250"/>
    <property type="project" value="UniProtKB"/>
</dbReference>
<dbReference type="GO" id="GO:0042405">
    <property type="term" value="C:nuclear inclusion body"/>
    <property type="evidence" value="ECO:0000250"/>
    <property type="project" value="UniProtKB"/>
</dbReference>
<dbReference type="GO" id="GO:0005634">
    <property type="term" value="C:nucleus"/>
    <property type="evidence" value="ECO:0000314"/>
    <property type="project" value="UniProtKB"/>
</dbReference>
<dbReference type="GO" id="GO:1990904">
    <property type="term" value="C:ribonucleoprotein complex"/>
    <property type="evidence" value="ECO:0000250"/>
    <property type="project" value="UniProtKB"/>
</dbReference>
<dbReference type="GO" id="GO:0008143">
    <property type="term" value="F:poly(A) binding"/>
    <property type="evidence" value="ECO:0000250"/>
    <property type="project" value="UniProtKB"/>
</dbReference>
<dbReference type="GO" id="GO:0003723">
    <property type="term" value="F:RNA binding"/>
    <property type="evidence" value="ECO:0000250"/>
    <property type="project" value="UniProtKB"/>
</dbReference>
<dbReference type="GO" id="GO:0070063">
    <property type="term" value="F:RNA polymerase binding"/>
    <property type="evidence" value="ECO:0000250"/>
    <property type="project" value="UniProtKB"/>
</dbReference>
<dbReference type="GO" id="GO:0071222">
    <property type="term" value="P:cellular response to lipopolysaccharide"/>
    <property type="evidence" value="ECO:0000250"/>
    <property type="project" value="UniProtKB"/>
</dbReference>
<dbReference type="GO" id="GO:0000165">
    <property type="term" value="P:MAPK cascade"/>
    <property type="evidence" value="ECO:0000250"/>
    <property type="project" value="UniProtKB"/>
</dbReference>
<dbReference type="GO" id="GO:0031124">
    <property type="term" value="P:mRNA 3'-end processing"/>
    <property type="evidence" value="ECO:0000250"/>
    <property type="project" value="UniProtKB"/>
</dbReference>
<dbReference type="GO" id="GO:1904247">
    <property type="term" value="P:positive regulation of polynucleotide adenylyltransferase activity"/>
    <property type="evidence" value="ECO:0000250"/>
    <property type="project" value="UniProtKB"/>
</dbReference>
<dbReference type="CDD" id="cd12550">
    <property type="entry name" value="RRM_II_PABPN1"/>
    <property type="match status" value="1"/>
</dbReference>
<dbReference type="FunFam" id="3.30.70.330:FF:000311">
    <property type="entry name" value="polyadenylate-binding protein 2"/>
    <property type="match status" value="1"/>
</dbReference>
<dbReference type="Gene3D" id="3.30.70.330">
    <property type="match status" value="1"/>
</dbReference>
<dbReference type="InterPro" id="IPR012677">
    <property type="entry name" value="Nucleotide-bd_a/b_plait_sf"/>
</dbReference>
<dbReference type="InterPro" id="IPR035979">
    <property type="entry name" value="RBD_domain_sf"/>
</dbReference>
<dbReference type="InterPro" id="IPR000504">
    <property type="entry name" value="RRM_dom"/>
</dbReference>
<dbReference type="PANTHER" id="PTHR23236">
    <property type="entry name" value="EUKARYOTIC TRANSLATION INITIATION FACTOR 4B/4H"/>
    <property type="match status" value="1"/>
</dbReference>
<dbReference type="PANTHER" id="PTHR23236:SF16">
    <property type="entry name" value="POLYADENYLATE-BINDING PROTEIN 2"/>
    <property type="match status" value="1"/>
</dbReference>
<dbReference type="Pfam" id="PF00076">
    <property type="entry name" value="RRM_1"/>
    <property type="match status" value="1"/>
</dbReference>
<dbReference type="SMART" id="SM00360">
    <property type="entry name" value="RRM"/>
    <property type="match status" value="1"/>
</dbReference>
<dbReference type="SUPFAM" id="SSF54928">
    <property type="entry name" value="RNA-binding domain, RBD"/>
    <property type="match status" value="1"/>
</dbReference>
<dbReference type="PROSITE" id="PS50102">
    <property type="entry name" value="RRM"/>
    <property type="match status" value="1"/>
</dbReference>
<comment type="function">
    <text evidence="1">Involved in the 3'-end formation of mRNA precursors (pre-mRNA) by the addition of a poly(A) tail of 200-250 nt to the upstream cleavage product. Stimulates poly(A) polymerase (PAPOLA) conferring processivity on the poly(A) tail elongation reaction and also controls the poly(A) tail length. Increases the affinity of poly(A) polymerase for RNA. Binds to poly(A) and to poly(G) with high affinity. May protect the poly(A) tail from degradation.</text>
</comment>
<comment type="subunit">
    <text evidence="2">Monomer and homooligomer. Binds RNA as a monomer and oligomerizes when bound to poly(A) (By similarity).</text>
</comment>
<comment type="subcellular location">
    <subcellularLocation>
        <location evidence="6 7">Nucleus</location>
    </subcellularLocation>
    <subcellularLocation>
        <location evidence="2">Cytoplasm</location>
    </subcellularLocation>
    <text evidence="2">Shuttles between the nucleus and the cytoplasm but predominantly found in the nucleus.</text>
</comment>
<comment type="tissue specificity">
    <text evidence="6 7">Shows dynamic spatial expression throughout development. First expressed in the animal pole region of the egg and this pattern persists through to the blastula stage. In gastrula and neurula embryos, expressed mainly in ectodermal, neural and epidermal regions. Neural tissue-specific expression pattern persists into tailbud stage when expression is localized to the brain and spinal cord. At early tadpole stage, expression becomes gradually confined to the specific vesicle regions of the developing brain. At stage 39, expressed in the telencephalon and mesencephalon regions of the brain. Also detected in the eye and olfactory pit at the tadpole stage. Expressed during gut endoderm development. At stage 35, expressed exclusively in the anterior portion of the gut endoderm, which includes the prospective liver, stomach and pancreas. As development proceeds, expression becomes restricted to the pancreas, and by stage 46/47 (the seventh day of development) expression is localized exclusively to the pancreas. Expressed in most adult tissues.</text>
</comment>
<comment type="developmental stage">
    <text evidence="6 7">Expressed both maternally and zygotically. Expressed at relatively constant levels throughout development.</text>
</comment>
<comment type="domain">
    <text evidence="1">The RRM domain is essential for specific adenine bases recognition in the poly(A) tail but not sufficient for poly(A) binding.</text>
</comment>
<keyword id="KW-0175">Coiled coil</keyword>
<keyword id="KW-0963">Cytoplasm</keyword>
<keyword id="KW-0507">mRNA processing</keyword>
<keyword id="KW-0539">Nucleus</keyword>
<keyword id="KW-1185">Reference proteome</keyword>
<keyword id="KW-0694">RNA-binding</keyword>
<reference evidence="8 9" key="1">
    <citation type="journal article" date="2001" name="Mech. Dev.">
        <title>Poly(A) binding protein II in Xenopus laevis is expressed in developing brain and pancreas.</title>
        <authorList>
            <person name="Kim J."/>
            <person name="Choi S.C."/>
            <person name="Chang J.Y."/>
            <person name="Han J.K."/>
        </authorList>
    </citation>
    <scope>NUCLEOTIDE SEQUENCE [MRNA]</scope>
    <scope>SUBCELLULAR LOCATION</scope>
    <scope>TISSUE SPECIFICITY</scope>
    <scope>DEVELOPMENTAL STAGE</scope>
    <source>
        <tissue evidence="6">Embryo</tissue>
    </source>
</reference>
<reference evidence="8 11" key="2">
    <citation type="journal article" date="2004" name="Genesis">
        <title>Xenopus embryonic poly(A) binding protein 2 (ePABP2) defines a new family of cytoplasmic poly(A) binding proteins expressed during the early stages of vertebrate development.</title>
        <authorList>
            <person name="Good P.J."/>
            <person name="Abler L."/>
            <person name="Herring D."/>
            <person name="Sheets M.D."/>
        </authorList>
    </citation>
    <scope>NUCLEOTIDE SEQUENCE [MRNA]</scope>
    <scope>SUBCELLULAR LOCATION</scope>
    <scope>TISSUE SPECIFICITY</scope>
    <scope>DEVELOPMENTAL STAGE</scope>
    <source>
        <tissue evidence="7">Tail bud</tissue>
    </source>
</reference>
<reference evidence="10" key="3">
    <citation type="submission" date="2004-06" db="EMBL/GenBank/DDBJ databases">
        <authorList>
            <consortium name="NIH - Xenopus Gene Collection (XGC) project"/>
        </authorList>
    </citation>
    <scope>NUCLEOTIDE SEQUENCE [LARGE SCALE MRNA]</scope>
    <source>
        <tissue evidence="10">Embryo</tissue>
    </source>
</reference>
<accession>Q9DDY9</accession>
<feature type="chain" id="PRO_0000252082" description="Polyadenylate-binding protein 2-A">
    <location>
        <begin position="1"/>
        <end position="296"/>
    </location>
</feature>
<feature type="domain" description="RRM" evidence="4">
    <location>
        <begin position="163"/>
        <end position="240"/>
    </location>
</feature>
<feature type="region of interest" description="Disordered" evidence="5">
    <location>
        <begin position="1"/>
        <end position="106"/>
    </location>
</feature>
<feature type="region of interest" description="Necessary for homooligomerization" evidence="2">
    <location>
        <begin position="146"/>
        <end position="296"/>
    </location>
</feature>
<feature type="coiled-coil region" evidence="3">
    <location>
        <begin position="107"/>
        <end position="141"/>
    </location>
</feature>
<feature type="compositionally biased region" description="Gly residues" evidence="5">
    <location>
        <begin position="71"/>
        <end position="82"/>
    </location>
</feature>
<feature type="compositionally biased region" description="Acidic residues" evidence="5">
    <location>
        <begin position="84"/>
        <end position="97"/>
    </location>
</feature>